<name>YQGF_CERS5</name>
<feature type="chain" id="PRO_1000061560" description="Putative pre-16S rRNA nuclease">
    <location>
        <begin position="1"/>
        <end position="160"/>
    </location>
</feature>
<dbReference type="EC" id="3.1.-.-" evidence="1"/>
<dbReference type="EMBL" id="CP000661">
    <property type="protein sequence ID" value="ABP70770.1"/>
    <property type="molecule type" value="Genomic_DNA"/>
</dbReference>
<dbReference type="SMR" id="A4WTQ6"/>
<dbReference type="STRING" id="349102.Rsph17025_1879"/>
<dbReference type="KEGG" id="rsq:Rsph17025_1879"/>
<dbReference type="eggNOG" id="COG0816">
    <property type="taxonomic scope" value="Bacteria"/>
</dbReference>
<dbReference type="HOGENOM" id="CLU_098240_1_1_5"/>
<dbReference type="BioCyc" id="RSPH349102:G1G8M-1943-MONOMER"/>
<dbReference type="GO" id="GO:0005829">
    <property type="term" value="C:cytosol"/>
    <property type="evidence" value="ECO:0007669"/>
    <property type="project" value="TreeGrafter"/>
</dbReference>
<dbReference type="GO" id="GO:0004518">
    <property type="term" value="F:nuclease activity"/>
    <property type="evidence" value="ECO:0007669"/>
    <property type="project" value="UniProtKB-KW"/>
</dbReference>
<dbReference type="GO" id="GO:0000967">
    <property type="term" value="P:rRNA 5'-end processing"/>
    <property type="evidence" value="ECO:0007669"/>
    <property type="project" value="UniProtKB-UniRule"/>
</dbReference>
<dbReference type="CDD" id="cd16964">
    <property type="entry name" value="YqgF"/>
    <property type="match status" value="1"/>
</dbReference>
<dbReference type="Gene3D" id="3.30.420.140">
    <property type="entry name" value="YqgF/RNase H-like domain"/>
    <property type="match status" value="1"/>
</dbReference>
<dbReference type="HAMAP" id="MF_00651">
    <property type="entry name" value="Nuclease_YqgF"/>
    <property type="match status" value="1"/>
</dbReference>
<dbReference type="InterPro" id="IPR012337">
    <property type="entry name" value="RNaseH-like_sf"/>
</dbReference>
<dbReference type="InterPro" id="IPR005227">
    <property type="entry name" value="YqgF"/>
</dbReference>
<dbReference type="InterPro" id="IPR006641">
    <property type="entry name" value="YqgF/RNaseH-like_dom"/>
</dbReference>
<dbReference type="InterPro" id="IPR037027">
    <property type="entry name" value="YqgF/RNaseH-like_dom_sf"/>
</dbReference>
<dbReference type="NCBIfam" id="TIGR00250">
    <property type="entry name" value="RNAse_H_YqgF"/>
    <property type="match status" value="1"/>
</dbReference>
<dbReference type="PANTHER" id="PTHR33317">
    <property type="entry name" value="POLYNUCLEOTIDYL TRANSFERASE, RIBONUCLEASE H-LIKE SUPERFAMILY PROTEIN"/>
    <property type="match status" value="1"/>
</dbReference>
<dbReference type="PANTHER" id="PTHR33317:SF4">
    <property type="entry name" value="POLYNUCLEOTIDYL TRANSFERASE, RIBONUCLEASE H-LIKE SUPERFAMILY PROTEIN"/>
    <property type="match status" value="1"/>
</dbReference>
<dbReference type="Pfam" id="PF03652">
    <property type="entry name" value="RuvX"/>
    <property type="match status" value="1"/>
</dbReference>
<dbReference type="SMART" id="SM00732">
    <property type="entry name" value="YqgFc"/>
    <property type="match status" value="1"/>
</dbReference>
<dbReference type="SUPFAM" id="SSF53098">
    <property type="entry name" value="Ribonuclease H-like"/>
    <property type="match status" value="1"/>
</dbReference>
<evidence type="ECO:0000255" key="1">
    <source>
        <dbReference type="HAMAP-Rule" id="MF_00651"/>
    </source>
</evidence>
<accession>A4WTQ6</accession>
<gene>
    <name type="ordered locus">Rsph17025_1879</name>
</gene>
<protein>
    <recommendedName>
        <fullName evidence="1">Putative pre-16S rRNA nuclease</fullName>
        <ecNumber evidence="1">3.1.-.-</ecNumber>
    </recommendedName>
</protein>
<reference key="1">
    <citation type="submission" date="2007-04" db="EMBL/GenBank/DDBJ databases">
        <title>Complete sequence of chromosome of Rhodobacter sphaeroides ATCC 17025.</title>
        <authorList>
            <consortium name="US DOE Joint Genome Institute"/>
            <person name="Copeland A."/>
            <person name="Lucas S."/>
            <person name="Lapidus A."/>
            <person name="Barry K."/>
            <person name="Detter J.C."/>
            <person name="Glavina del Rio T."/>
            <person name="Hammon N."/>
            <person name="Israni S."/>
            <person name="Dalin E."/>
            <person name="Tice H."/>
            <person name="Pitluck S."/>
            <person name="Chertkov O."/>
            <person name="Brettin T."/>
            <person name="Bruce D."/>
            <person name="Han C."/>
            <person name="Schmutz J."/>
            <person name="Larimer F."/>
            <person name="Land M."/>
            <person name="Hauser L."/>
            <person name="Kyrpides N."/>
            <person name="Kim E."/>
            <person name="Richardson P."/>
            <person name="Mackenzie C."/>
            <person name="Choudhary M."/>
            <person name="Donohue T.J."/>
            <person name="Kaplan S."/>
        </authorList>
    </citation>
    <scope>NUCLEOTIDE SEQUENCE [LARGE SCALE GENOMIC DNA]</scope>
    <source>
        <strain>ATCC 17025 / ATH 2.4.3</strain>
    </source>
</reference>
<keyword id="KW-0963">Cytoplasm</keyword>
<keyword id="KW-0378">Hydrolase</keyword>
<keyword id="KW-0540">Nuclease</keyword>
<keyword id="KW-0690">Ribosome biogenesis</keyword>
<comment type="function">
    <text evidence="1">Could be a nuclease involved in processing of the 5'-end of pre-16S rRNA.</text>
</comment>
<comment type="subcellular location">
    <subcellularLocation>
        <location evidence="1">Cytoplasm</location>
    </subcellularLocation>
</comment>
<comment type="similarity">
    <text evidence="1">Belongs to the YqgF nuclease family.</text>
</comment>
<sequence length="160" mass="17537">MIHESIEEFLAALPRSGALIGLDLGTKTIGVAVTDGLRRIATPLLTIRRTKFTEDAARLRAITAERGLVGIVLGLPRNMDGSEGPRAQSTRAFARNLSQVLPLPIGYWDERLSTVAAERALIEADTSRKRRAEVIDHVAAGYILQGVLDRLDWLGRERNA</sequence>
<organism>
    <name type="scientific">Cereibacter sphaeroides (strain ATCC 17025 / ATH 2.4.3)</name>
    <name type="common">Rhodobacter sphaeroides</name>
    <dbReference type="NCBI Taxonomy" id="349102"/>
    <lineage>
        <taxon>Bacteria</taxon>
        <taxon>Pseudomonadati</taxon>
        <taxon>Pseudomonadota</taxon>
        <taxon>Alphaproteobacteria</taxon>
        <taxon>Rhodobacterales</taxon>
        <taxon>Paracoccaceae</taxon>
        <taxon>Cereibacter</taxon>
    </lineage>
</organism>
<proteinExistence type="inferred from homology"/>